<reference key="1">
    <citation type="journal article" date="2009" name="PLoS Genet.">
        <title>Organised genome dynamics in the Escherichia coli species results in highly diverse adaptive paths.</title>
        <authorList>
            <person name="Touchon M."/>
            <person name="Hoede C."/>
            <person name="Tenaillon O."/>
            <person name="Barbe V."/>
            <person name="Baeriswyl S."/>
            <person name="Bidet P."/>
            <person name="Bingen E."/>
            <person name="Bonacorsi S."/>
            <person name="Bouchier C."/>
            <person name="Bouvet O."/>
            <person name="Calteau A."/>
            <person name="Chiapello H."/>
            <person name="Clermont O."/>
            <person name="Cruveiller S."/>
            <person name="Danchin A."/>
            <person name="Diard M."/>
            <person name="Dossat C."/>
            <person name="Karoui M.E."/>
            <person name="Frapy E."/>
            <person name="Garry L."/>
            <person name="Ghigo J.M."/>
            <person name="Gilles A.M."/>
            <person name="Johnson J."/>
            <person name="Le Bouguenec C."/>
            <person name="Lescat M."/>
            <person name="Mangenot S."/>
            <person name="Martinez-Jehanne V."/>
            <person name="Matic I."/>
            <person name="Nassif X."/>
            <person name="Oztas S."/>
            <person name="Petit M.A."/>
            <person name="Pichon C."/>
            <person name="Rouy Z."/>
            <person name="Ruf C.S."/>
            <person name="Schneider D."/>
            <person name="Tourret J."/>
            <person name="Vacherie B."/>
            <person name="Vallenet D."/>
            <person name="Medigue C."/>
            <person name="Rocha E.P.C."/>
            <person name="Denamur E."/>
        </authorList>
    </citation>
    <scope>NUCLEOTIDE SEQUENCE [LARGE SCALE GENOMIC DNA]</scope>
    <source>
        <strain>UMN026 / ExPEC</strain>
    </source>
</reference>
<dbReference type="EMBL" id="CU928163">
    <property type="protein sequence ID" value="CAR13297.1"/>
    <property type="molecule type" value="Genomic_DNA"/>
</dbReference>
<dbReference type="RefSeq" id="WP_000457334.1">
    <property type="nucleotide sequence ID" value="NC_011751.1"/>
</dbReference>
<dbReference type="RefSeq" id="YP_002412828.1">
    <property type="nucleotide sequence ID" value="NC_011751.1"/>
</dbReference>
<dbReference type="SMR" id="B7NBF7"/>
<dbReference type="STRING" id="585056.ECUMN_2103"/>
<dbReference type="KEGG" id="eum:ECUMN_2103"/>
<dbReference type="PATRIC" id="fig|585056.7.peg.2290"/>
<dbReference type="HOGENOM" id="CLU_185263_0_0_6"/>
<dbReference type="Proteomes" id="UP000007097">
    <property type="component" value="Chromosome"/>
</dbReference>
<dbReference type="HAMAP" id="MF_00507">
    <property type="entry name" value="UPF0181"/>
    <property type="match status" value="1"/>
</dbReference>
<dbReference type="InterPro" id="IPR005371">
    <property type="entry name" value="UPF0181"/>
</dbReference>
<dbReference type="NCBIfam" id="NF003476">
    <property type="entry name" value="PRK05114.1"/>
    <property type="match status" value="1"/>
</dbReference>
<dbReference type="Pfam" id="PF03701">
    <property type="entry name" value="UPF0181"/>
    <property type="match status" value="1"/>
</dbReference>
<protein>
    <recommendedName>
        <fullName evidence="1">UPF0181 protein YoaH</fullName>
    </recommendedName>
</protein>
<evidence type="ECO:0000255" key="1">
    <source>
        <dbReference type="HAMAP-Rule" id="MF_00507"/>
    </source>
</evidence>
<gene>
    <name evidence="1" type="primary">yoaH</name>
    <name type="ordered locus">ECUMN_2103</name>
</gene>
<organism>
    <name type="scientific">Escherichia coli O17:K52:H18 (strain UMN026 / ExPEC)</name>
    <dbReference type="NCBI Taxonomy" id="585056"/>
    <lineage>
        <taxon>Bacteria</taxon>
        <taxon>Pseudomonadati</taxon>
        <taxon>Pseudomonadota</taxon>
        <taxon>Gammaproteobacteria</taxon>
        <taxon>Enterobacterales</taxon>
        <taxon>Enterobacteriaceae</taxon>
        <taxon>Escherichia</taxon>
    </lineage>
</organism>
<feature type="chain" id="PRO_1000127046" description="UPF0181 protein YoaH">
    <location>
        <begin position="1"/>
        <end position="59"/>
    </location>
</feature>
<accession>B7NBF7</accession>
<sequence>MFAGLPSLTHEQQQKAVERIQELMAQGMSSGQAIALVAEELRANHSGERIVARFEDEDE</sequence>
<name>YOAH_ECOLU</name>
<proteinExistence type="inferred from homology"/>
<comment type="similarity">
    <text evidence="1">Belongs to the UPF0181 family.</text>
</comment>